<accession>P66262</accession>
<accession>Q8NKZ4</accession>
<reference key="1">
    <citation type="journal article" date="2002" name="Nature">
        <title>Comparison of the genomes of two Xanthomonas pathogens with differing host specificities.</title>
        <authorList>
            <person name="da Silva A.C.R."/>
            <person name="Ferro J.A."/>
            <person name="Reinach F.C."/>
            <person name="Farah C.S."/>
            <person name="Furlan L.R."/>
            <person name="Quaggio R.B."/>
            <person name="Monteiro-Vitorello C.B."/>
            <person name="Van Sluys M.A."/>
            <person name="Almeida N.F. Jr."/>
            <person name="Alves L.M.C."/>
            <person name="do Amaral A.M."/>
            <person name="Bertolini M.C."/>
            <person name="Camargo L.E.A."/>
            <person name="Camarotte G."/>
            <person name="Cannavan F."/>
            <person name="Cardozo J."/>
            <person name="Chambergo F."/>
            <person name="Ciapina L.P."/>
            <person name="Cicarelli R.M.B."/>
            <person name="Coutinho L.L."/>
            <person name="Cursino-Santos J.R."/>
            <person name="El-Dorry H."/>
            <person name="Faria J.B."/>
            <person name="Ferreira A.J.S."/>
            <person name="Ferreira R.C.C."/>
            <person name="Ferro M.I.T."/>
            <person name="Formighieri E.F."/>
            <person name="Franco M.C."/>
            <person name="Greggio C.C."/>
            <person name="Gruber A."/>
            <person name="Katsuyama A.M."/>
            <person name="Kishi L.T."/>
            <person name="Leite R.P."/>
            <person name="Lemos E.G.M."/>
            <person name="Lemos M.V.F."/>
            <person name="Locali E.C."/>
            <person name="Machado M.A."/>
            <person name="Madeira A.M.B.N."/>
            <person name="Martinez-Rossi N.M."/>
            <person name="Martins E.C."/>
            <person name="Meidanis J."/>
            <person name="Menck C.F.M."/>
            <person name="Miyaki C.Y."/>
            <person name="Moon D.H."/>
            <person name="Moreira L.M."/>
            <person name="Novo M.T.M."/>
            <person name="Okura V.K."/>
            <person name="Oliveira M.C."/>
            <person name="Oliveira V.R."/>
            <person name="Pereira H.A."/>
            <person name="Rossi A."/>
            <person name="Sena J.A.D."/>
            <person name="Silva C."/>
            <person name="de Souza R.F."/>
            <person name="Spinola L.A.F."/>
            <person name="Takita M.A."/>
            <person name="Tamura R.E."/>
            <person name="Teixeira E.C."/>
            <person name="Tezza R.I.D."/>
            <person name="Trindade dos Santos M."/>
            <person name="Truffi D."/>
            <person name="Tsai S.M."/>
            <person name="White F.F."/>
            <person name="Setubal J.C."/>
            <person name="Kitajima J.P."/>
        </authorList>
    </citation>
    <scope>NUCLEOTIDE SEQUENCE [LARGE SCALE GENOMIC DNA]</scope>
    <source>
        <strain>ATCC 33913 / DSM 3586 / NCPPB 528 / LMG 568 / P 25</strain>
    </source>
</reference>
<evidence type="ECO:0000255" key="1">
    <source>
        <dbReference type="HAMAP-Rule" id="MF_00391"/>
    </source>
</evidence>
<evidence type="ECO:0000256" key="2">
    <source>
        <dbReference type="SAM" id="MobiDB-lite"/>
    </source>
</evidence>
<evidence type="ECO:0000305" key="3"/>
<gene>
    <name evidence="1" type="primary">rpmH</name>
    <name type="ordered locus">XCC4242</name>
</gene>
<name>RL34_XANCP</name>
<comment type="similarity">
    <text evidence="1">Belongs to the bacterial ribosomal protein bL34 family.</text>
</comment>
<sequence>MATKRTFQPSNLKRARDHGFRARMATADGRKILARRRAKGRKRLSA</sequence>
<organism>
    <name type="scientific">Xanthomonas campestris pv. campestris (strain ATCC 33913 / DSM 3586 / NCPPB 528 / LMG 568 / P 25)</name>
    <dbReference type="NCBI Taxonomy" id="190485"/>
    <lineage>
        <taxon>Bacteria</taxon>
        <taxon>Pseudomonadati</taxon>
        <taxon>Pseudomonadota</taxon>
        <taxon>Gammaproteobacteria</taxon>
        <taxon>Lysobacterales</taxon>
        <taxon>Lysobacteraceae</taxon>
        <taxon>Xanthomonas</taxon>
    </lineage>
</organism>
<keyword id="KW-1185">Reference proteome</keyword>
<keyword id="KW-0687">Ribonucleoprotein</keyword>
<keyword id="KW-0689">Ribosomal protein</keyword>
<feature type="chain" id="PRO_0000187508" description="Large ribosomal subunit protein bL34">
    <location>
        <begin position="1"/>
        <end position="46"/>
    </location>
</feature>
<feature type="region of interest" description="Disordered" evidence="2">
    <location>
        <begin position="1"/>
        <end position="46"/>
    </location>
</feature>
<feature type="compositionally biased region" description="Polar residues" evidence="2">
    <location>
        <begin position="1"/>
        <end position="11"/>
    </location>
</feature>
<feature type="compositionally biased region" description="Basic residues" evidence="2">
    <location>
        <begin position="32"/>
        <end position="46"/>
    </location>
</feature>
<dbReference type="EMBL" id="AE008922">
    <property type="protein sequence ID" value="AAM43458.1"/>
    <property type="molecule type" value="Genomic_DNA"/>
</dbReference>
<dbReference type="RefSeq" id="NP_639576.1">
    <property type="nucleotide sequence ID" value="NC_003902.1"/>
</dbReference>
<dbReference type="RefSeq" id="WP_002805908.1">
    <property type="nucleotide sequence ID" value="NC_003902.1"/>
</dbReference>
<dbReference type="SMR" id="P66262"/>
<dbReference type="STRING" id="190485.XCC4242"/>
<dbReference type="EnsemblBacteria" id="AAM43458">
    <property type="protein sequence ID" value="AAM43458"/>
    <property type="gene ID" value="XCC4242"/>
</dbReference>
<dbReference type="GeneID" id="97512525"/>
<dbReference type="KEGG" id="xcc:XCC4242"/>
<dbReference type="PATRIC" id="fig|190485.4.peg.4556"/>
<dbReference type="eggNOG" id="COG0230">
    <property type="taxonomic scope" value="Bacteria"/>
</dbReference>
<dbReference type="HOGENOM" id="CLU_129938_2_0_6"/>
<dbReference type="PRO" id="PR:P66262"/>
<dbReference type="Proteomes" id="UP000001010">
    <property type="component" value="Chromosome"/>
</dbReference>
<dbReference type="GO" id="GO:1990904">
    <property type="term" value="C:ribonucleoprotein complex"/>
    <property type="evidence" value="ECO:0007669"/>
    <property type="project" value="UniProtKB-KW"/>
</dbReference>
<dbReference type="GO" id="GO:0005840">
    <property type="term" value="C:ribosome"/>
    <property type="evidence" value="ECO:0007669"/>
    <property type="project" value="UniProtKB-KW"/>
</dbReference>
<dbReference type="GO" id="GO:0003735">
    <property type="term" value="F:structural constituent of ribosome"/>
    <property type="evidence" value="ECO:0007669"/>
    <property type="project" value="InterPro"/>
</dbReference>
<dbReference type="GO" id="GO:0006412">
    <property type="term" value="P:translation"/>
    <property type="evidence" value="ECO:0007669"/>
    <property type="project" value="UniProtKB-UniRule"/>
</dbReference>
<dbReference type="FunFam" id="1.10.287.3980:FF:000001">
    <property type="entry name" value="Mitochondrial ribosomal protein L34"/>
    <property type="match status" value="1"/>
</dbReference>
<dbReference type="Gene3D" id="1.10.287.3980">
    <property type="match status" value="1"/>
</dbReference>
<dbReference type="HAMAP" id="MF_00391">
    <property type="entry name" value="Ribosomal_bL34"/>
    <property type="match status" value="1"/>
</dbReference>
<dbReference type="InterPro" id="IPR000271">
    <property type="entry name" value="Ribosomal_bL34"/>
</dbReference>
<dbReference type="InterPro" id="IPR020939">
    <property type="entry name" value="Ribosomal_bL34_CS"/>
</dbReference>
<dbReference type="NCBIfam" id="TIGR01030">
    <property type="entry name" value="rpmH_bact"/>
    <property type="match status" value="1"/>
</dbReference>
<dbReference type="PANTHER" id="PTHR14503:SF4">
    <property type="entry name" value="LARGE RIBOSOMAL SUBUNIT PROTEIN BL34M"/>
    <property type="match status" value="1"/>
</dbReference>
<dbReference type="PANTHER" id="PTHR14503">
    <property type="entry name" value="MITOCHONDRIAL RIBOSOMAL PROTEIN 34 FAMILY MEMBER"/>
    <property type="match status" value="1"/>
</dbReference>
<dbReference type="Pfam" id="PF00468">
    <property type="entry name" value="Ribosomal_L34"/>
    <property type="match status" value="1"/>
</dbReference>
<dbReference type="PROSITE" id="PS00784">
    <property type="entry name" value="RIBOSOMAL_L34"/>
    <property type="match status" value="1"/>
</dbReference>
<proteinExistence type="inferred from homology"/>
<protein>
    <recommendedName>
        <fullName evidence="1">Large ribosomal subunit protein bL34</fullName>
    </recommendedName>
    <alternativeName>
        <fullName evidence="3">50S ribosomal protein L34</fullName>
    </alternativeName>
</protein>